<organism>
    <name type="scientific">Caenorhabditis elegans</name>
    <dbReference type="NCBI Taxonomy" id="6239"/>
    <lineage>
        <taxon>Eukaryota</taxon>
        <taxon>Metazoa</taxon>
        <taxon>Ecdysozoa</taxon>
        <taxon>Nematoda</taxon>
        <taxon>Chromadorea</taxon>
        <taxon>Rhabditida</taxon>
        <taxon>Rhabditina</taxon>
        <taxon>Rhabditomorpha</taxon>
        <taxon>Rhabditoidea</taxon>
        <taxon>Rhabditidae</taxon>
        <taxon>Peloderinae</taxon>
        <taxon>Caenorhabditis</taxon>
    </lineage>
</organism>
<keyword id="KW-1003">Cell membrane</keyword>
<keyword id="KW-0966">Cell projection</keyword>
<keyword id="KW-0968">Cytoplasmic vesicle</keyword>
<keyword id="KW-0472">Membrane</keyword>
<keyword id="KW-1185">Reference proteome</keyword>
<keyword id="KW-0732">Signal</keyword>
<keyword id="KW-0770">Synapse</keyword>
<keyword id="KW-0812">Transmembrane</keyword>
<keyword id="KW-1133">Transmembrane helix</keyword>
<evidence type="ECO:0000255" key="1"/>
<evidence type="ECO:0000269" key="2">
    <source>
    </source>
</evidence>
<evidence type="ECO:0000303" key="3">
    <source>
    </source>
</evidence>
<evidence type="ECO:0000305" key="4"/>
<evidence type="ECO:0000312" key="5">
    <source>
        <dbReference type="EMBL" id="CAA21550.1"/>
    </source>
</evidence>
<evidence type="ECO:0000312" key="6">
    <source>
        <dbReference type="WormBase" id="Y41C4A.13"/>
    </source>
</evidence>
<feature type="signal peptide" evidence="1">
    <location>
        <begin position="1"/>
        <end position="16"/>
    </location>
</feature>
<feature type="chain" id="PRO_0000424559" description="Protein SUP-1" evidence="1">
    <location>
        <begin position="17"/>
        <end position="103"/>
    </location>
</feature>
<feature type="topological domain" description="Extracellular" evidence="1">
    <location>
        <begin position="17"/>
        <end position="75"/>
    </location>
</feature>
<feature type="transmembrane region" description="Helical" evidence="1">
    <location>
        <begin position="76"/>
        <end position="96"/>
    </location>
</feature>
<feature type="topological domain" description="Cytoplasmic" evidence="1">
    <location>
        <begin position="97"/>
        <end position="103"/>
    </location>
</feature>
<feature type="mutagenesis site" description="In e995; suppresses the uncoordinated phenotype of the unc-17 G347R mutation." evidence="2">
    <original>G</original>
    <variation>E</variation>
    <location>
        <position position="84"/>
    </location>
</feature>
<sequence>MMSYIALAACIGLAMAANVDHDVKSAVNEVTTTKDGDTYCPVPLVGTKCGTSSIFHYWKCCGELNKECCFNLQTWVWVTLALFGVIFIASFVISLVRCICCRK</sequence>
<name>SUP1_CAEEL</name>
<reference evidence="5" key="1">
    <citation type="journal article" date="1998" name="Science">
        <title>Genome sequence of the nematode C. elegans: a platform for investigating biology.</title>
        <authorList>
            <consortium name="The C. elegans sequencing consortium"/>
        </authorList>
    </citation>
    <scope>NUCLEOTIDE SEQUENCE [LARGE SCALE GENOMIC DNA]</scope>
    <source>
        <strain evidence="5">Bristol N2</strain>
    </source>
</reference>
<reference evidence="4" key="2">
    <citation type="journal article" date="2012" name="Genetics">
        <title>Genetic interactions between UNC-17/VAChT and a novel transmembrane protein in Caenorhabditis elegans.</title>
        <authorList>
            <person name="Mathews E.A."/>
            <person name="Mullen G.P."/>
            <person name="Hodgkin J."/>
            <person name="Duerr J.S."/>
            <person name="Rand J.B."/>
        </authorList>
    </citation>
    <scope>FUNCTION</scope>
    <scope>SUBCELLULAR LOCATION</scope>
    <scope>TISSUE SPECIFICITY</scope>
    <scope>DEVELOPMENTAL STAGE</scope>
    <scope>DISRUPTION PHENOTYPE</scope>
    <scope>MUTAGENESIS OF GLY-84</scope>
</reference>
<accession>Q9XWU2</accession>
<proteinExistence type="evidence at protein level"/>
<comment type="function">
    <text evidence="3">May be involved in trafficking or stabilization of the vesicular acetylcholine transporter unc-17.</text>
</comment>
<comment type="subcellular location">
    <subcellularLocation>
        <location evidence="2">Cell membrane</location>
        <topology evidence="2">Single-pass type I membrane protein</topology>
    </subcellularLocation>
    <subcellularLocation>
        <location evidence="2">Perikaryon</location>
    </subcellularLocation>
    <subcellularLocation>
        <location evidence="2">Cell projection</location>
    </subcellularLocation>
    <subcellularLocation>
        <location evidence="2">Synapse</location>
    </subcellularLocation>
    <subcellularLocation>
        <location evidence="2">Cytoplasmic vesicle</location>
        <location evidence="2">Secretory vesicle</location>
        <location evidence="2">Synaptic vesicle</location>
    </subcellularLocation>
</comment>
<comment type="tissue specificity">
    <text evidence="2">Expressed in a subset of neurons and in body wall muscles. In the nervous system, expressed specifically in cholinergic motor neurons of the ventral nerve cord, a subset of cholinergic head neurons, anterior sublateral neurons, and body sublateral neurons (at protein level).</text>
</comment>
<comment type="developmental stage">
    <text evidence="2">First detected in the embryo and persists throughout development (at protein level).</text>
</comment>
<comment type="disruption phenotype">
    <text evidence="2">Mild decrease in swimming behavior but otherwise no apparent phenotype.</text>
</comment>
<dbReference type="EMBL" id="AL032627">
    <property type="protein sequence ID" value="CAA21550.1"/>
    <property type="molecule type" value="Genomic_DNA"/>
</dbReference>
<dbReference type="PIR" id="T26806">
    <property type="entry name" value="T26806"/>
</dbReference>
<dbReference type="RefSeq" id="NP_499520.1">
    <property type="nucleotide sequence ID" value="NM_067119.7"/>
</dbReference>
<dbReference type="SMR" id="Q9XWU2"/>
<dbReference type="BioGRID" id="54439">
    <property type="interactions" value="3"/>
</dbReference>
<dbReference type="FunCoup" id="Q9XWU2">
    <property type="interactions" value="57"/>
</dbReference>
<dbReference type="STRING" id="6239.Y41C4A.13.1"/>
<dbReference type="PaxDb" id="6239-Y41C4A.13"/>
<dbReference type="PeptideAtlas" id="Q9XWU2"/>
<dbReference type="EnsemblMetazoa" id="Y41C4A.13.1">
    <property type="protein sequence ID" value="Y41C4A.13.1"/>
    <property type="gene ID" value="WBGene00012759"/>
</dbReference>
<dbReference type="GeneID" id="189815"/>
<dbReference type="KEGG" id="cel:CELE_Y41C4A.13"/>
<dbReference type="UCSC" id="Y41C4A.13">
    <property type="organism name" value="c. elegans"/>
</dbReference>
<dbReference type="AGR" id="WB:WBGene00012759"/>
<dbReference type="CTD" id="189815"/>
<dbReference type="WormBase" id="Y41C4A.13">
    <property type="protein sequence ID" value="CE20253"/>
    <property type="gene ID" value="WBGene00012759"/>
    <property type="gene designation" value="sup-1"/>
</dbReference>
<dbReference type="eggNOG" id="ENOG502STS7">
    <property type="taxonomic scope" value="Eukaryota"/>
</dbReference>
<dbReference type="GeneTree" id="ENSGT00970000196367"/>
<dbReference type="HOGENOM" id="CLU_178014_0_0_1"/>
<dbReference type="InParanoid" id="Q9XWU2"/>
<dbReference type="OMA" id="FNLQTWV"/>
<dbReference type="OrthoDB" id="5874082at2759"/>
<dbReference type="PhylomeDB" id="Q9XWU2"/>
<dbReference type="PRO" id="PR:Q9XWU2"/>
<dbReference type="Proteomes" id="UP000001940">
    <property type="component" value="Chromosome III"/>
</dbReference>
<dbReference type="Bgee" id="WBGene00012759">
    <property type="expression patterns" value="Expressed in larva and 3 other cell types or tissues"/>
</dbReference>
<dbReference type="GO" id="GO:0043005">
    <property type="term" value="C:neuron projection"/>
    <property type="evidence" value="ECO:0000314"/>
    <property type="project" value="WormBase"/>
</dbReference>
<dbReference type="GO" id="GO:0043025">
    <property type="term" value="C:neuronal cell body"/>
    <property type="evidence" value="ECO:0000314"/>
    <property type="project" value="WormBase"/>
</dbReference>
<dbReference type="GO" id="GO:0032809">
    <property type="term" value="C:neuronal cell body membrane"/>
    <property type="evidence" value="ECO:0000314"/>
    <property type="project" value="WormBase"/>
</dbReference>
<dbReference type="GO" id="GO:0043204">
    <property type="term" value="C:perikaryon"/>
    <property type="evidence" value="ECO:0007669"/>
    <property type="project" value="UniProtKB-SubCell"/>
</dbReference>
<dbReference type="GO" id="GO:0005886">
    <property type="term" value="C:plasma membrane"/>
    <property type="evidence" value="ECO:0000314"/>
    <property type="project" value="WormBase"/>
</dbReference>
<dbReference type="GO" id="GO:0045202">
    <property type="term" value="C:synapse"/>
    <property type="evidence" value="ECO:0000314"/>
    <property type="project" value="WormBase"/>
</dbReference>
<dbReference type="GO" id="GO:0008021">
    <property type="term" value="C:synaptic vesicle"/>
    <property type="evidence" value="ECO:0007669"/>
    <property type="project" value="UniProtKB-SubCell"/>
</dbReference>
<dbReference type="InterPro" id="IPR022559">
    <property type="entry name" value="SUP-1-like"/>
</dbReference>
<dbReference type="PANTHER" id="PTHR34149">
    <property type="entry name" value="PROTEIN CBG11905-RELATED"/>
    <property type="match status" value="1"/>
</dbReference>
<dbReference type="PANTHER" id="PTHR34149:SF13">
    <property type="entry name" value="PROTEIN SUP-1"/>
    <property type="match status" value="1"/>
</dbReference>
<dbReference type="Pfam" id="PF10853">
    <property type="entry name" value="DUF2650"/>
    <property type="match status" value="1"/>
</dbReference>
<protein>
    <recommendedName>
        <fullName evidence="5">Protein SUP-1</fullName>
    </recommendedName>
</protein>
<gene>
    <name evidence="5 6" type="primary">sup-1</name>
    <name type="ORF">Y41C4A.13</name>
</gene>